<feature type="chain" id="PRO_1000003981" description="Small ribosomal subunit protein uS2">
    <location>
        <begin position="1"/>
        <end position="267"/>
    </location>
</feature>
<feature type="region of interest" description="Disordered" evidence="2">
    <location>
        <begin position="224"/>
        <end position="267"/>
    </location>
</feature>
<feature type="compositionally biased region" description="Basic and acidic residues" evidence="2">
    <location>
        <begin position="225"/>
        <end position="251"/>
    </location>
</feature>
<comment type="similarity">
    <text evidence="1">Belongs to the universal ribosomal protein uS2 family.</text>
</comment>
<dbReference type="EMBL" id="CP000416">
    <property type="protein sequence ID" value="ABJ64451.1"/>
    <property type="molecule type" value="Genomic_DNA"/>
</dbReference>
<dbReference type="RefSeq" id="WP_011668024.1">
    <property type="nucleotide sequence ID" value="NC_008497.1"/>
</dbReference>
<dbReference type="SMR" id="Q03QS1"/>
<dbReference type="STRING" id="387344.LVIS_1350"/>
<dbReference type="GeneID" id="56993120"/>
<dbReference type="KEGG" id="lbr:LVIS_1350"/>
<dbReference type="eggNOG" id="COG0052">
    <property type="taxonomic scope" value="Bacteria"/>
</dbReference>
<dbReference type="HOGENOM" id="CLU_040318_1_2_9"/>
<dbReference type="Proteomes" id="UP000001652">
    <property type="component" value="Chromosome"/>
</dbReference>
<dbReference type="GO" id="GO:0022627">
    <property type="term" value="C:cytosolic small ribosomal subunit"/>
    <property type="evidence" value="ECO:0007669"/>
    <property type="project" value="TreeGrafter"/>
</dbReference>
<dbReference type="GO" id="GO:0003735">
    <property type="term" value="F:structural constituent of ribosome"/>
    <property type="evidence" value="ECO:0007669"/>
    <property type="project" value="InterPro"/>
</dbReference>
<dbReference type="GO" id="GO:0006412">
    <property type="term" value="P:translation"/>
    <property type="evidence" value="ECO:0007669"/>
    <property type="project" value="UniProtKB-UniRule"/>
</dbReference>
<dbReference type="CDD" id="cd01425">
    <property type="entry name" value="RPS2"/>
    <property type="match status" value="1"/>
</dbReference>
<dbReference type="FunFam" id="1.10.287.610:FF:000001">
    <property type="entry name" value="30S ribosomal protein S2"/>
    <property type="match status" value="1"/>
</dbReference>
<dbReference type="Gene3D" id="3.40.50.10490">
    <property type="entry name" value="Glucose-6-phosphate isomerase like protein, domain 1"/>
    <property type="match status" value="1"/>
</dbReference>
<dbReference type="Gene3D" id="1.10.287.610">
    <property type="entry name" value="Helix hairpin bin"/>
    <property type="match status" value="1"/>
</dbReference>
<dbReference type="HAMAP" id="MF_00291_B">
    <property type="entry name" value="Ribosomal_uS2_B"/>
    <property type="match status" value="1"/>
</dbReference>
<dbReference type="InterPro" id="IPR001865">
    <property type="entry name" value="Ribosomal_uS2"/>
</dbReference>
<dbReference type="InterPro" id="IPR005706">
    <property type="entry name" value="Ribosomal_uS2_bac/mit/plastid"/>
</dbReference>
<dbReference type="InterPro" id="IPR018130">
    <property type="entry name" value="Ribosomal_uS2_CS"/>
</dbReference>
<dbReference type="InterPro" id="IPR023591">
    <property type="entry name" value="Ribosomal_uS2_flav_dom_sf"/>
</dbReference>
<dbReference type="NCBIfam" id="TIGR01011">
    <property type="entry name" value="rpsB_bact"/>
    <property type="match status" value="1"/>
</dbReference>
<dbReference type="PANTHER" id="PTHR12534">
    <property type="entry name" value="30S RIBOSOMAL PROTEIN S2 PROKARYOTIC AND ORGANELLAR"/>
    <property type="match status" value="1"/>
</dbReference>
<dbReference type="PANTHER" id="PTHR12534:SF0">
    <property type="entry name" value="SMALL RIBOSOMAL SUBUNIT PROTEIN US2M"/>
    <property type="match status" value="1"/>
</dbReference>
<dbReference type="Pfam" id="PF00318">
    <property type="entry name" value="Ribosomal_S2"/>
    <property type="match status" value="1"/>
</dbReference>
<dbReference type="PRINTS" id="PR00395">
    <property type="entry name" value="RIBOSOMALS2"/>
</dbReference>
<dbReference type="SUPFAM" id="SSF52313">
    <property type="entry name" value="Ribosomal protein S2"/>
    <property type="match status" value="1"/>
</dbReference>
<dbReference type="PROSITE" id="PS00962">
    <property type="entry name" value="RIBOSOMAL_S2_1"/>
    <property type="match status" value="1"/>
</dbReference>
<dbReference type="PROSITE" id="PS00963">
    <property type="entry name" value="RIBOSOMAL_S2_2"/>
    <property type="match status" value="1"/>
</dbReference>
<keyword id="KW-1185">Reference proteome</keyword>
<keyword id="KW-0687">Ribonucleoprotein</keyword>
<keyword id="KW-0689">Ribosomal protein</keyword>
<sequence length="267" mass="30112">MAVISMKQLLEAGVHFGHQTRRWNPKMKQYIFTERNGIYIIDLQKTVKLIDAAYNYMKDEAAKGAVVLFVGTKKQAQDSIEEEATRAGQYYVNHRWLGGTLTNWETIQTRIKRLKSLKKMATDGTFDVLPKKEVSLLKKSQDKLERFLGGIEDMPKLPDVMFIVDPRKEQIAVHEAQKLNIPIVAMVDTNTDPDEIDVVIPSNDDAIRAVRLITSKMADAIVEGRQGEDQVDEKTFEGQKSEAAEGDKKTADNSMEDIVNAVEGDNK</sequence>
<organism>
    <name type="scientific">Levilactobacillus brevis (strain ATCC 367 / BCRC 12310 / CIP 105137 / JCM 1170 / LMG 11437 / NCIMB 947 / NCTC 947)</name>
    <name type="common">Lactobacillus brevis</name>
    <dbReference type="NCBI Taxonomy" id="387344"/>
    <lineage>
        <taxon>Bacteria</taxon>
        <taxon>Bacillati</taxon>
        <taxon>Bacillota</taxon>
        <taxon>Bacilli</taxon>
        <taxon>Lactobacillales</taxon>
        <taxon>Lactobacillaceae</taxon>
        <taxon>Levilactobacillus</taxon>
    </lineage>
</organism>
<proteinExistence type="inferred from homology"/>
<name>RS2_LEVBA</name>
<reference key="1">
    <citation type="journal article" date="2006" name="Proc. Natl. Acad. Sci. U.S.A.">
        <title>Comparative genomics of the lactic acid bacteria.</title>
        <authorList>
            <person name="Makarova K.S."/>
            <person name="Slesarev A."/>
            <person name="Wolf Y.I."/>
            <person name="Sorokin A."/>
            <person name="Mirkin B."/>
            <person name="Koonin E.V."/>
            <person name="Pavlov A."/>
            <person name="Pavlova N."/>
            <person name="Karamychev V."/>
            <person name="Polouchine N."/>
            <person name="Shakhova V."/>
            <person name="Grigoriev I."/>
            <person name="Lou Y."/>
            <person name="Rohksar D."/>
            <person name="Lucas S."/>
            <person name="Huang K."/>
            <person name="Goodstein D.M."/>
            <person name="Hawkins T."/>
            <person name="Plengvidhya V."/>
            <person name="Welker D."/>
            <person name="Hughes J."/>
            <person name="Goh Y."/>
            <person name="Benson A."/>
            <person name="Baldwin K."/>
            <person name="Lee J.-H."/>
            <person name="Diaz-Muniz I."/>
            <person name="Dosti B."/>
            <person name="Smeianov V."/>
            <person name="Wechter W."/>
            <person name="Barabote R."/>
            <person name="Lorca G."/>
            <person name="Altermann E."/>
            <person name="Barrangou R."/>
            <person name="Ganesan B."/>
            <person name="Xie Y."/>
            <person name="Rawsthorne H."/>
            <person name="Tamir D."/>
            <person name="Parker C."/>
            <person name="Breidt F."/>
            <person name="Broadbent J.R."/>
            <person name="Hutkins R."/>
            <person name="O'Sullivan D."/>
            <person name="Steele J."/>
            <person name="Unlu G."/>
            <person name="Saier M.H. Jr."/>
            <person name="Klaenhammer T."/>
            <person name="Richardson P."/>
            <person name="Kozyavkin S."/>
            <person name="Weimer B.C."/>
            <person name="Mills D.A."/>
        </authorList>
    </citation>
    <scope>NUCLEOTIDE SEQUENCE [LARGE SCALE GENOMIC DNA]</scope>
    <source>
        <strain>ATCC 367 / BCRC 12310 / CIP 105137 / JCM 1170 / LMG 11437 / NCIMB 947 / NCTC 947</strain>
    </source>
</reference>
<gene>
    <name evidence="1" type="primary">rpsB</name>
    <name type="ordered locus">LVIS_1350</name>
</gene>
<accession>Q03QS1</accession>
<protein>
    <recommendedName>
        <fullName evidence="1">Small ribosomal subunit protein uS2</fullName>
    </recommendedName>
    <alternativeName>
        <fullName evidence="3">30S ribosomal protein S2</fullName>
    </alternativeName>
</protein>
<evidence type="ECO:0000255" key="1">
    <source>
        <dbReference type="HAMAP-Rule" id="MF_00291"/>
    </source>
</evidence>
<evidence type="ECO:0000256" key="2">
    <source>
        <dbReference type="SAM" id="MobiDB-lite"/>
    </source>
</evidence>
<evidence type="ECO:0000305" key="3"/>